<gene>
    <name evidence="1" type="primary">recO</name>
    <name type="ordered locus">PSEEN4288</name>
</gene>
<keyword id="KW-0227">DNA damage</keyword>
<keyword id="KW-0233">DNA recombination</keyword>
<keyword id="KW-0234">DNA repair</keyword>
<reference key="1">
    <citation type="journal article" date="2006" name="Nat. Biotechnol.">
        <title>Complete genome sequence of the entomopathogenic and metabolically versatile soil bacterium Pseudomonas entomophila.</title>
        <authorList>
            <person name="Vodovar N."/>
            <person name="Vallenet D."/>
            <person name="Cruveiller S."/>
            <person name="Rouy Z."/>
            <person name="Barbe V."/>
            <person name="Acosta C."/>
            <person name="Cattolico L."/>
            <person name="Jubin C."/>
            <person name="Lajus A."/>
            <person name="Segurens B."/>
            <person name="Vacherie B."/>
            <person name="Wincker P."/>
            <person name="Weissenbach J."/>
            <person name="Lemaitre B."/>
            <person name="Medigue C."/>
            <person name="Boccard F."/>
        </authorList>
    </citation>
    <scope>NUCLEOTIDE SEQUENCE [LARGE SCALE GENOMIC DNA]</scope>
    <source>
        <strain>L48</strain>
    </source>
</reference>
<proteinExistence type="inferred from homology"/>
<sequence>MEQPAPQPAYVLHSRAYKETSALVDFLTPQGRVRAVLRRARGKGGSLVRPFVPLEVELRGRGELKNVGRLDSTGIAAWLHGDALFSGLYLNELLMRLLPAEAPYPALFEHYTLTLQALAAGRPLEPLLRSFEWRLLDELGYAFSLSQDVNDAAVVADGLYRLRVDAGLERVELFQPGLFKGSELLALAEADWDAPGALLAAKRLMRQALAVHLGTKPLVSRELFRKR</sequence>
<name>RECO_PSEE4</name>
<accession>Q1I5W0</accession>
<organism>
    <name type="scientific">Pseudomonas entomophila (strain L48)</name>
    <dbReference type="NCBI Taxonomy" id="384676"/>
    <lineage>
        <taxon>Bacteria</taxon>
        <taxon>Pseudomonadati</taxon>
        <taxon>Pseudomonadota</taxon>
        <taxon>Gammaproteobacteria</taxon>
        <taxon>Pseudomonadales</taxon>
        <taxon>Pseudomonadaceae</taxon>
        <taxon>Pseudomonas</taxon>
    </lineage>
</organism>
<protein>
    <recommendedName>
        <fullName evidence="1">DNA repair protein RecO</fullName>
    </recommendedName>
    <alternativeName>
        <fullName evidence="1">Recombination protein O</fullName>
    </alternativeName>
</protein>
<evidence type="ECO:0000255" key="1">
    <source>
        <dbReference type="HAMAP-Rule" id="MF_00201"/>
    </source>
</evidence>
<feature type="chain" id="PRO_1000012149" description="DNA repair protein RecO">
    <location>
        <begin position="1"/>
        <end position="227"/>
    </location>
</feature>
<dbReference type="EMBL" id="CT573326">
    <property type="protein sequence ID" value="CAK16975.1"/>
    <property type="molecule type" value="Genomic_DNA"/>
</dbReference>
<dbReference type="RefSeq" id="WP_011535346.1">
    <property type="nucleotide sequence ID" value="NC_008027.1"/>
</dbReference>
<dbReference type="SMR" id="Q1I5W0"/>
<dbReference type="STRING" id="384676.PSEEN4288"/>
<dbReference type="GeneID" id="32807293"/>
<dbReference type="KEGG" id="pen:PSEEN4288"/>
<dbReference type="eggNOG" id="COG1381">
    <property type="taxonomic scope" value="Bacteria"/>
</dbReference>
<dbReference type="HOGENOM" id="CLU_066645_1_0_6"/>
<dbReference type="OrthoDB" id="9804792at2"/>
<dbReference type="Proteomes" id="UP000000658">
    <property type="component" value="Chromosome"/>
</dbReference>
<dbReference type="GO" id="GO:0043590">
    <property type="term" value="C:bacterial nucleoid"/>
    <property type="evidence" value="ECO:0007669"/>
    <property type="project" value="TreeGrafter"/>
</dbReference>
<dbReference type="GO" id="GO:0006310">
    <property type="term" value="P:DNA recombination"/>
    <property type="evidence" value="ECO:0007669"/>
    <property type="project" value="UniProtKB-UniRule"/>
</dbReference>
<dbReference type="GO" id="GO:0006302">
    <property type="term" value="P:double-strand break repair"/>
    <property type="evidence" value="ECO:0007669"/>
    <property type="project" value="TreeGrafter"/>
</dbReference>
<dbReference type="Gene3D" id="2.40.50.140">
    <property type="entry name" value="Nucleic acid-binding proteins"/>
    <property type="match status" value="1"/>
</dbReference>
<dbReference type="Gene3D" id="1.20.1440.120">
    <property type="entry name" value="Recombination protein O, C-terminal domain"/>
    <property type="match status" value="1"/>
</dbReference>
<dbReference type="HAMAP" id="MF_00201">
    <property type="entry name" value="RecO"/>
    <property type="match status" value="1"/>
</dbReference>
<dbReference type="InterPro" id="IPR037278">
    <property type="entry name" value="ARFGAP/RecO"/>
</dbReference>
<dbReference type="InterPro" id="IPR022572">
    <property type="entry name" value="DNA_rep/recomb_RecO_N"/>
</dbReference>
<dbReference type="InterPro" id="IPR012340">
    <property type="entry name" value="NA-bd_OB-fold"/>
</dbReference>
<dbReference type="InterPro" id="IPR003717">
    <property type="entry name" value="RecO"/>
</dbReference>
<dbReference type="InterPro" id="IPR042242">
    <property type="entry name" value="RecO_C"/>
</dbReference>
<dbReference type="NCBIfam" id="TIGR00613">
    <property type="entry name" value="reco"/>
    <property type="match status" value="1"/>
</dbReference>
<dbReference type="PANTHER" id="PTHR33991">
    <property type="entry name" value="DNA REPAIR PROTEIN RECO"/>
    <property type="match status" value="1"/>
</dbReference>
<dbReference type="PANTHER" id="PTHR33991:SF1">
    <property type="entry name" value="DNA REPAIR PROTEIN RECO"/>
    <property type="match status" value="1"/>
</dbReference>
<dbReference type="Pfam" id="PF02565">
    <property type="entry name" value="RecO_C"/>
    <property type="match status" value="1"/>
</dbReference>
<dbReference type="Pfam" id="PF11967">
    <property type="entry name" value="RecO_N"/>
    <property type="match status" value="1"/>
</dbReference>
<dbReference type="SUPFAM" id="SSF57863">
    <property type="entry name" value="ArfGap/RecO-like zinc finger"/>
    <property type="match status" value="1"/>
</dbReference>
<dbReference type="SUPFAM" id="SSF50249">
    <property type="entry name" value="Nucleic acid-binding proteins"/>
    <property type="match status" value="1"/>
</dbReference>
<comment type="function">
    <text evidence="1">Involved in DNA repair and RecF pathway recombination.</text>
</comment>
<comment type="similarity">
    <text evidence="1">Belongs to the RecO family.</text>
</comment>